<proteinExistence type="inferred from homology"/>
<keyword id="KW-0067">ATP-binding</keyword>
<keyword id="KW-0436">Ligase</keyword>
<keyword id="KW-0547">Nucleotide-binding</keyword>
<keyword id="KW-0648">Protein biosynthesis</keyword>
<evidence type="ECO:0000255" key="1">
    <source>
        <dbReference type="HAMAP-Rule" id="MF_00120"/>
    </source>
</evidence>
<dbReference type="EC" id="6.3.5.7" evidence="1"/>
<dbReference type="EMBL" id="CP000937">
    <property type="protein sequence ID" value="ABZ87138.1"/>
    <property type="molecule type" value="Genomic_DNA"/>
</dbReference>
<dbReference type="SMR" id="B0TWN0"/>
<dbReference type="KEGG" id="fph:Fphi_0915"/>
<dbReference type="eggNOG" id="COG0154">
    <property type="taxonomic scope" value="Bacteria"/>
</dbReference>
<dbReference type="HOGENOM" id="CLU_009600_0_3_6"/>
<dbReference type="GO" id="GO:0030956">
    <property type="term" value="C:glutamyl-tRNA(Gln) amidotransferase complex"/>
    <property type="evidence" value="ECO:0007669"/>
    <property type="project" value="InterPro"/>
</dbReference>
<dbReference type="GO" id="GO:0005524">
    <property type="term" value="F:ATP binding"/>
    <property type="evidence" value="ECO:0007669"/>
    <property type="project" value="UniProtKB-KW"/>
</dbReference>
<dbReference type="GO" id="GO:0050567">
    <property type="term" value="F:glutaminyl-tRNA synthase (glutamine-hydrolyzing) activity"/>
    <property type="evidence" value="ECO:0007669"/>
    <property type="project" value="UniProtKB-UniRule"/>
</dbReference>
<dbReference type="GO" id="GO:0006412">
    <property type="term" value="P:translation"/>
    <property type="evidence" value="ECO:0007669"/>
    <property type="project" value="UniProtKB-UniRule"/>
</dbReference>
<dbReference type="Gene3D" id="3.90.1300.10">
    <property type="entry name" value="Amidase signature (AS) domain"/>
    <property type="match status" value="1"/>
</dbReference>
<dbReference type="HAMAP" id="MF_00120">
    <property type="entry name" value="GatA"/>
    <property type="match status" value="1"/>
</dbReference>
<dbReference type="InterPro" id="IPR000120">
    <property type="entry name" value="Amidase"/>
</dbReference>
<dbReference type="InterPro" id="IPR020556">
    <property type="entry name" value="Amidase_CS"/>
</dbReference>
<dbReference type="InterPro" id="IPR023631">
    <property type="entry name" value="Amidase_dom"/>
</dbReference>
<dbReference type="InterPro" id="IPR036928">
    <property type="entry name" value="AS_sf"/>
</dbReference>
<dbReference type="InterPro" id="IPR004412">
    <property type="entry name" value="GatA"/>
</dbReference>
<dbReference type="NCBIfam" id="TIGR00132">
    <property type="entry name" value="gatA"/>
    <property type="match status" value="1"/>
</dbReference>
<dbReference type="PANTHER" id="PTHR11895:SF151">
    <property type="entry name" value="GLUTAMYL-TRNA(GLN) AMIDOTRANSFERASE SUBUNIT A"/>
    <property type="match status" value="1"/>
</dbReference>
<dbReference type="PANTHER" id="PTHR11895">
    <property type="entry name" value="TRANSAMIDASE"/>
    <property type="match status" value="1"/>
</dbReference>
<dbReference type="Pfam" id="PF01425">
    <property type="entry name" value="Amidase"/>
    <property type="match status" value="1"/>
</dbReference>
<dbReference type="SUPFAM" id="SSF75304">
    <property type="entry name" value="Amidase signature (AS) enzymes"/>
    <property type="match status" value="1"/>
</dbReference>
<dbReference type="PROSITE" id="PS00571">
    <property type="entry name" value="AMIDASES"/>
    <property type="match status" value="1"/>
</dbReference>
<reference key="1">
    <citation type="submission" date="2007-12" db="EMBL/GenBank/DDBJ databases">
        <title>Complete sequence of chromosome of Francisella philomiragia subsp. philomiragia ATCC 25017.</title>
        <authorList>
            <consortium name="US DOE Joint Genome Institute"/>
            <person name="Copeland A."/>
            <person name="Lucas S."/>
            <person name="Lapidus A."/>
            <person name="Barry K."/>
            <person name="Detter J.C."/>
            <person name="Glavina del Rio T."/>
            <person name="Hammon N."/>
            <person name="Israni S."/>
            <person name="Dalin E."/>
            <person name="Tice H."/>
            <person name="Pitluck S."/>
            <person name="Chain P."/>
            <person name="Malfatti S."/>
            <person name="Shin M."/>
            <person name="Vergez L."/>
            <person name="Schmutz J."/>
            <person name="Larimer F."/>
            <person name="Land M."/>
            <person name="Hauser L."/>
            <person name="Richardson P."/>
        </authorList>
    </citation>
    <scope>NUCLEOTIDE SEQUENCE [LARGE SCALE GENOMIC DNA]</scope>
    <source>
        <strain>ATCC 25017 / CCUG 19701 / FSC 153 / O#319-036</strain>
    </source>
</reference>
<comment type="function">
    <text evidence="1">Allows the formation of correctly charged Gln-tRNA(Gln) through the transamidation of misacylated Glu-tRNA(Gln) in organisms which lack glutaminyl-tRNA synthetase. The reaction takes place in the presence of glutamine and ATP through an activated gamma-phospho-Glu-tRNA(Gln).</text>
</comment>
<comment type="catalytic activity">
    <reaction evidence="1">
        <text>L-glutamyl-tRNA(Gln) + L-glutamine + ATP + H2O = L-glutaminyl-tRNA(Gln) + L-glutamate + ADP + phosphate + H(+)</text>
        <dbReference type="Rhea" id="RHEA:17521"/>
        <dbReference type="Rhea" id="RHEA-COMP:9681"/>
        <dbReference type="Rhea" id="RHEA-COMP:9684"/>
        <dbReference type="ChEBI" id="CHEBI:15377"/>
        <dbReference type="ChEBI" id="CHEBI:15378"/>
        <dbReference type="ChEBI" id="CHEBI:29985"/>
        <dbReference type="ChEBI" id="CHEBI:30616"/>
        <dbReference type="ChEBI" id="CHEBI:43474"/>
        <dbReference type="ChEBI" id="CHEBI:58359"/>
        <dbReference type="ChEBI" id="CHEBI:78520"/>
        <dbReference type="ChEBI" id="CHEBI:78521"/>
        <dbReference type="ChEBI" id="CHEBI:456216"/>
        <dbReference type="EC" id="6.3.5.7"/>
    </reaction>
</comment>
<comment type="subunit">
    <text evidence="1">Heterotrimer of A, B and C subunits.</text>
</comment>
<comment type="similarity">
    <text evidence="1">Belongs to the amidase family. GatA subfamily.</text>
</comment>
<protein>
    <recommendedName>
        <fullName evidence="1">Glutamyl-tRNA(Gln) amidotransferase subunit A</fullName>
        <shortName evidence="1">Glu-ADT subunit A</shortName>
        <ecNumber evidence="1">6.3.5.7</ecNumber>
    </recommendedName>
</protein>
<sequence>MSYIKKLRARLDSGEVTAVELTKQYLAKIKDQDKSINSVITLCEAEALKEAENADAIISAGKQSLLTGIPILHKDLFCTKGIKTTAASKMLDNFVAPYDSTVTKNCKDQGMVTLGKLNMDEFAMGSTNEHSYYGAVSNPWDLDRVPGGSSGGSAAAVAAGFAPVSTGSDTGGSVRQPASFCGLTAMKPTYGSTSRFGMVAFASSFDQAGIFGHYAEDVAIMLDAISGECQYDSTCVGVKENHFTQDLEKDISGKVIGIDESLIKDLPAQIQEAVSKTLDNFKKLGAEIKSVKVPDLKEALSTYYIITPAEAAANLARYDGIRYGYRNPEARDLDELYRKSRTDGFGEEVKRRIMIGNYVLASSQYDSYYNKAQQLRKVMTDQINQIFEQVDVIFMPAAPSEAFKKGDKLDPVSAYLSDIYTIPANISGLPAIAFPIGFANDLPVGGQFMAKAFNDNVLTQMVTQYQNSYGIEEFILEQARI</sequence>
<name>GATA_FRAP2</name>
<feature type="chain" id="PRO_1000076130" description="Glutamyl-tRNA(Gln) amidotransferase subunit A">
    <location>
        <begin position="1"/>
        <end position="481"/>
    </location>
</feature>
<feature type="active site" description="Charge relay system" evidence="1">
    <location>
        <position position="74"/>
    </location>
</feature>
<feature type="active site" description="Charge relay system" evidence="1">
    <location>
        <position position="149"/>
    </location>
</feature>
<feature type="active site" description="Acyl-ester intermediate" evidence="1">
    <location>
        <position position="173"/>
    </location>
</feature>
<accession>B0TWN0</accession>
<gene>
    <name evidence="1" type="primary">gatA</name>
    <name type="ordered locus">Fphi_0915</name>
</gene>
<organism>
    <name type="scientific">Francisella philomiragia subsp. philomiragia (strain ATCC 25017 / CCUG 19701 / FSC 153 / O#319-036)</name>
    <dbReference type="NCBI Taxonomy" id="484022"/>
    <lineage>
        <taxon>Bacteria</taxon>
        <taxon>Pseudomonadati</taxon>
        <taxon>Pseudomonadota</taxon>
        <taxon>Gammaproteobacteria</taxon>
        <taxon>Thiotrichales</taxon>
        <taxon>Francisellaceae</taxon>
        <taxon>Francisella</taxon>
    </lineage>
</organism>